<reference key="1">
    <citation type="journal article" date="2011" name="Stand. Genomic Sci.">
        <title>Complete genome sequence of 'Thioalkalivibrio sulfidophilus' HL-EbGr7.</title>
        <authorList>
            <person name="Muyzer G."/>
            <person name="Sorokin D.Y."/>
            <person name="Mavromatis K."/>
            <person name="Lapidus A."/>
            <person name="Clum A."/>
            <person name="Ivanova N."/>
            <person name="Pati A."/>
            <person name="d'Haeseleer P."/>
            <person name="Woyke T."/>
            <person name="Kyrpides N.C."/>
        </authorList>
    </citation>
    <scope>NUCLEOTIDE SEQUENCE [LARGE SCALE GENOMIC DNA]</scope>
    <source>
        <strain>HL-EbGR7</strain>
    </source>
</reference>
<gene>
    <name evidence="1" type="primary">rpmJ</name>
    <name type="ordered locus">Tgr7_2303</name>
</gene>
<keyword id="KW-1185">Reference proteome</keyword>
<keyword id="KW-0687">Ribonucleoprotein</keyword>
<keyword id="KW-0689">Ribosomal protein</keyword>
<evidence type="ECO:0000255" key="1">
    <source>
        <dbReference type="HAMAP-Rule" id="MF_00251"/>
    </source>
</evidence>
<evidence type="ECO:0000305" key="2"/>
<protein>
    <recommendedName>
        <fullName evidence="1">Large ribosomal subunit protein bL36</fullName>
    </recommendedName>
    <alternativeName>
        <fullName evidence="2">50S ribosomal protein L36</fullName>
    </alternativeName>
</protein>
<feature type="chain" id="PRO_1000125509" description="Large ribosomal subunit protein bL36">
    <location>
        <begin position="1"/>
        <end position="37"/>
    </location>
</feature>
<comment type="similarity">
    <text evidence="1">Belongs to the bacterial ribosomal protein bL36 family.</text>
</comment>
<sequence>MKVRASVKTICRNCKVIRRNGVVRVICKDPRHKQRQG</sequence>
<name>RL36_THISH</name>
<proteinExistence type="inferred from homology"/>
<accession>B8GV37</accession>
<organism>
    <name type="scientific">Thioalkalivibrio sulfidiphilus (strain HL-EbGR7)</name>
    <dbReference type="NCBI Taxonomy" id="396588"/>
    <lineage>
        <taxon>Bacteria</taxon>
        <taxon>Pseudomonadati</taxon>
        <taxon>Pseudomonadota</taxon>
        <taxon>Gammaproteobacteria</taxon>
        <taxon>Chromatiales</taxon>
        <taxon>Ectothiorhodospiraceae</taxon>
        <taxon>Thioalkalivibrio</taxon>
    </lineage>
</organism>
<dbReference type="EMBL" id="CP001339">
    <property type="protein sequence ID" value="ACL73383.1"/>
    <property type="molecule type" value="Genomic_DNA"/>
</dbReference>
<dbReference type="RefSeq" id="WP_012638859.1">
    <property type="nucleotide sequence ID" value="NC_011901.1"/>
</dbReference>
<dbReference type="SMR" id="B8GV37"/>
<dbReference type="STRING" id="396588.Tgr7_2303"/>
<dbReference type="KEGG" id="tgr:Tgr7_2303"/>
<dbReference type="eggNOG" id="COG0257">
    <property type="taxonomic scope" value="Bacteria"/>
</dbReference>
<dbReference type="HOGENOM" id="CLU_135723_6_2_6"/>
<dbReference type="OrthoDB" id="9802520at2"/>
<dbReference type="Proteomes" id="UP000002383">
    <property type="component" value="Chromosome"/>
</dbReference>
<dbReference type="GO" id="GO:0005737">
    <property type="term" value="C:cytoplasm"/>
    <property type="evidence" value="ECO:0007669"/>
    <property type="project" value="UniProtKB-ARBA"/>
</dbReference>
<dbReference type="GO" id="GO:1990904">
    <property type="term" value="C:ribonucleoprotein complex"/>
    <property type="evidence" value="ECO:0007669"/>
    <property type="project" value="UniProtKB-KW"/>
</dbReference>
<dbReference type="GO" id="GO:0005840">
    <property type="term" value="C:ribosome"/>
    <property type="evidence" value="ECO:0007669"/>
    <property type="project" value="UniProtKB-KW"/>
</dbReference>
<dbReference type="GO" id="GO:0003735">
    <property type="term" value="F:structural constituent of ribosome"/>
    <property type="evidence" value="ECO:0007669"/>
    <property type="project" value="InterPro"/>
</dbReference>
<dbReference type="GO" id="GO:0006412">
    <property type="term" value="P:translation"/>
    <property type="evidence" value="ECO:0007669"/>
    <property type="project" value="UniProtKB-UniRule"/>
</dbReference>
<dbReference type="HAMAP" id="MF_00251">
    <property type="entry name" value="Ribosomal_bL36"/>
    <property type="match status" value="1"/>
</dbReference>
<dbReference type="InterPro" id="IPR000473">
    <property type="entry name" value="Ribosomal_bL36"/>
</dbReference>
<dbReference type="InterPro" id="IPR035977">
    <property type="entry name" value="Ribosomal_bL36_sp"/>
</dbReference>
<dbReference type="NCBIfam" id="TIGR01022">
    <property type="entry name" value="rpmJ_bact"/>
    <property type="match status" value="1"/>
</dbReference>
<dbReference type="PANTHER" id="PTHR42888">
    <property type="entry name" value="50S RIBOSOMAL PROTEIN L36, CHLOROPLASTIC"/>
    <property type="match status" value="1"/>
</dbReference>
<dbReference type="PANTHER" id="PTHR42888:SF1">
    <property type="entry name" value="LARGE RIBOSOMAL SUBUNIT PROTEIN BL36C"/>
    <property type="match status" value="1"/>
</dbReference>
<dbReference type="Pfam" id="PF00444">
    <property type="entry name" value="Ribosomal_L36"/>
    <property type="match status" value="1"/>
</dbReference>
<dbReference type="SUPFAM" id="SSF57840">
    <property type="entry name" value="Ribosomal protein L36"/>
    <property type="match status" value="1"/>
</dbReference>
<dbReference type="PROSITE" id="PS00828">
    <property type="entry name" value="RIBOSOMAL_L36"/>
    <property type="match status" value="1"/>
</dbReference>